<accession>Q57IC9</accession>
<sequence length="514" mass="56286">MSVSKKPMVLVILDGYGYREEQQDNAILNAKTPVMDALWAKRPHTLIDASGLEVGLPDRQMGNSEVGHVNLGAGRIVYQDLTRLDVEIKERTFFANPVLTNAVDQAKNAGKAVHIMGLLSAGGVHSHEDHIMAMVELAAERGAEKIYLHAFLDGRDTPPRSAEASLKKFEDKFAAQGKGRVASIVGRYYAMDRDNRWDRVEKAYDLMTLAQGEFQADTAVAGLQAAYARDENDEFVKATVIRAEGQADAAMEDGDTLIFMNFRADRAREITRAFVNADFDGFARKKVVNLNFVMLTEYAADIKTTVAYPPASLANTFGEWMAKNDKTQLRISETEKYAHVTFFFNGGVEEPFAGEERILINSPKVATYDLQPEMSSAELTEKLVAAIESGKYDTIICNYPNGDMVGHTGVMEAAIKAVEALDNCIDQVTKAVESVGGQLLITADHGNAEQMRDPATGQAHTAHTNLPVPLIYVGEKNVKAVEGGKLSDIAPTMLSLMGMEIPQEMTGKPLFIVE</sequence>
<feature type="chain" id="PRO_0000212197" description="2,3-bisphosphoglycerate-independent phosphoglycerate mutase">
    <location>
        <begin position="1"/>
        <end position="514"/>
    </location>
</feature>
<feature type="active site" description="Phosphoserine intermediate" evidence="1">
    <location>
        <position position="64"/>
    </location>
</feature>
<feature type="binding site" evidence="1">
    <location>
        <position position="14"/>
    </location>
    <ligand>
        <name>Mn(2+)</name>
        <dbReference type="ChEBI" id="CHEBI:29035"/>
        <label>2</label>
    </ligand>
</feature>
<feature type="binding site" evidence="1">
    <location>
        <position position="64"/>
    </location>
    <ligand>
        <name>Mn(2+)</name>
        <dbReference type="ChEBI" id="CHEBI:29035"/>
        <label>2</label>
    </ligand>
</feature>
<feature type="binding site" evidence="1">
    <location>
        <position position="125"/>
    </location>
    <ligand>
        <name>substrate</name>
    </ligand>
</feature>
<feature type="binding site" evidence="1">
    <location>
        <begin position="155"/>
        <end position="156"/>
    </location>
    <ligand>
        <name>substrate</name>
    </ligand>
</feature>
<feature type="binding site" evidence="1">
    <location>
        <position position="187"/>
    </location>
    <ligand>
        <name>substrate</name>
    </ligand>
</feature>
<feature type="binding site" evidence="1">
    <location>
        <position position="193"/>
    </location>
    <ligand>
        <name>substrate</name>
    </ligand>
</feature>
<feature type="binding site" evidence="1">
    <location>
        <begin position="263"/>
        <end position="266"/>
    </location>
    <ligand>
        <name>substrate</name>
    </ligand>
</feature>
<feature type="binding site" evidence="1">
    <location>
        <position position="336"/>
    </location>
    <ligand>
        <name>substrate</name>
    </ligand>
</feature>
<feature type="binding site" evidence="1">
    <location>
        <position position="403"/>
    </location>
    <ligand>
        <name>Mn(2+)</name>
        <dbReference type="ChEBI" id="CHEBI:29035"/>
        <label>1</label>
    </ligand>
</feature>
<feature type="binding site" evidence="1">
    <location>
        <position position="407"/>
    </location>
    <ligand>
        <name>Mn(2+)</name>
        <dbReference type="ChEBI" id="CHEBI:29035"/>
        <label>1</label>
    </ligand>
</feature>
<feature type="binding site" evidence="1">
    <location>
        <position position="444"/>
    </location>
    <ligand>
        <name>Mn(2+)</name>
        <dbReference type="ChEBI" id="CHEBI:29035"/>
        <label>2</label>
    </ligand>
</feature>
<feature type="binding site" evidence="1">
    <location>
        <position position="445"/>
    </location>
    <ligand>
        <name>Mn(2+)</name>
        <dbReference type="ChEBI" id="CHEBI:29035"/>
        <label>2</label>
    </ligand>
</feature>
<feature type="binding site" evidence="1">
    <location>
        <position position="463"/>
    </location>
    <ligand>
        <name>Mn(2+)</name>
        <dbReference type="ChEBI" id="CHEBI:29035"/>
        <label>1</label>
    </ligand>
</feature>
<dbReference type="EC" id="5.4.2.12" evidence="1"/>
<dbReference type="EMBL" id="AE017220">
    <property type="protein sequence ID" value="AAX67533.1"/>
    <property type="molecule type" value="Genomic_DNA"/>
</dbReference>
<dbReference type="SMR" id="Q57IC9"/>
<dbReference type="KEGG" id="sec:SCH_3627"/>
<dbReference type="HOGENOM" id="CLU_026099_2_0_6"/>
<dbReference type="UniPathway" id="UPA00109">
    <property type="reaction ID" value="UER00186"/>
</dbReference>
<dbReference type="Proteomes" id="UP000000538">
    <property type="component" value="Chromosome"/>
</dbReference>
<dbReference type="GO" id="GO:0005829">
    <property type="term" value="C:cytosol"/>
    <property type="evidence" value="ECO:0007669"/>
    <property type="project" value="TreeGrafter"/>
</dbReference>
<dbReference type="GO" id="GO:0030145">
    <property type="term" value="F:manganese ion binding"/>
    <property type="evidence" value="ECO:0007669"/>
    <property type="project" value="UniProtKB-UniRule"/>
</dbReference>
<dbReference type="GO" id="GO:0004619">
    <property type="term" value="F:phosphoglycerate mutase activity"/>
    <property type="evidence" value="ECO:0007669"/>
    <property type="project" value="UniProtKB-EC"/>
</dbReference>
<dbReference type="GO" id="GO:0006007">
    <property type="term" value="P:glucose catabolic process"/>
    <property type="evidence" value="ECO:0007669"/>
    <property type="project" value="InterPro"/>
</dbReference>
<dbReference type="GO" id="GO:0006096">
    <property type="term" value="P:glycolytic process"/>
    <property type="evidence" value="ECO:0007669"/>
    <property type="project" value="UniProtKB-UniRule"/>
</dbReference>
<dbReference type="CDD" id="cd16010">
    <property type="entry name" value="iPGM"/>
    <property type="match status" value="1"/>
</dbReference>
<dbReference type="FunFam" id="3.40.1450.10:FF:000001">
    <property type="entry name" value="2,3-bisphosphoglycerate-independent phosphoglycerate mutase"/>
    <property type="match status" value="1"/>
</dbReference>
<dbReference type="FunFam" id="3.40.720.10:FF:000001">
    <property type="entry name" value="2,3-bisphosphoglycerate-independent phosphoglycerate mutase"/>
    <property type="match status" value="1"/>
</dbReference>
<dbReference type="Gene3D" id="3.40.720.10">
    <property type="entry name" value="Alkaline Phosphatase, subunit A"/>
    <property type="match status" value="1"/>
</dbReference>
<dbReference type="Gene3D" id="3.40.1450.10">
    <property type="entry name" value="BPG-independent phosphoglycerate mutase, domain B"/>
    <property type="match status" value="1"/>
</dbReference>
<dbReference type="HAMAP" id="MF_01038">
    <property type="entry name" value="GpmI"/>
    <property type="match status" value="1"/>
</dbReference>
<dbReference type="InterPro" id="IPR017850">
    <property type="entry name" value="Alkaline_phosphatase_core_sf"/>
</dbReference>
<dbReference type="InterPro" id="IPR011258">
    <property type="entry name" value="BPG-indep_PGM_N"/>
</dbReference>
<dbReference type="InterPro" id="IPR006124">
    <property type="entry name" value="Metalloenzyme"/>
</dbReference>
<dbReference type="InterPro" id="IPR036646">
    <property type="entry name" value="PGAM_B_sf"/>
</dbReference>
<dbReference type="InterPro" id="IPR005995">
    <property type="entry name" value="Pgm_bpd_ind"/>
</dbReference>
<dbReference type="NCBIfam" id="TIGR01307">
    <property type="entry name" value="pgm_bpd_ind"/>
    <property type="match status" value="1"/>
</dbReference>
<dbReference type="NCBIfam" id="NF003897">
    <property type="entry name" value="PRK05434.1-5"/>
    <property type="match status" value="1"/>
</dbReference>
<dbReference type="PANTHER" id="PTHR31637">
    <property type="entry name" value="2,3-BISPHOSPHOGLYCERATE-INDEPENDENT PHOSPHOGLYCERATE MUTASE"/>
    <property type="match status" value="1"/>
</dbReference>
<dbReference type="PANTHER" id="PTHR31637:SF0">
    <property type="entry name" value="2,3-BISPHOSPHOGLYCERATE-INDEPENDENT PHOSPHOGLYCERATE MUTASE"/>
    <property type="match status" value="1"/>
</dbReference>
<dbReference type="Pfam" id="PF06415">
    <property type="entry name" value="iPGM_N"/>
    <property type="match status" value="1"/>
</dbReference>
<dbReference type="Pfam" id="PF01676">
    <property type="entry name" value="Metalloenzyme"/>
    <property type="match status" value="1"/>
</dbReference>
<dbReference type="PIRSF" id="PIRSF001492">
    <property type="entry name" value="IPGAM"/>
    <property type="match status" value="1"/>
</dbReference>
<dbReference type="SUPFAM" id="SSF64158">
    <property type="entry name" value="2,3-Bisphosphoglycerate-independent phosphoglycerate mutase, substrate-binding domain"/>
    <property type="match status" value="1"/>
</dbReference>
<dbReference type="SUPFAM" id="SSF53649">
    <property type="entry name" value="Alkaline phosphatase-like"/>
    <property type="match status" value="1"/>
</dbReference>
<protein>
    <recommendedName>
        <fullName evidence="1">2,3-bisphosphoglycerate-independent phosphoglycerate mutase</fullName>
        <shortName evidence="1">BPG-independent PGAM</shortName>
        <shortName evidence="1">Phosphoglyceromutase</shortName>
        <shortName evidence="1">iPGM</shortName>
        <ecNumber evidence="1">5.4.2.12</ecNumber>
    </recommendedName>
</protein>
<name>GPMI_SALCH</name>
<proteinExistence type="inferred from homology"/>
<gene>
    <name evidence="1" type="primary">gpmI</name>
    <name type="ordered locus">SCH_3627</name>
</gene>
<reference key="1">
    <citation type="journal article" date="2005" name="Nucleic Acids Res.">
        <title>The genome sequence of Salmonella enterica serovar Choleraesuis, a highly invasive and resistant zoonotic pathogen.</title>
        <authorList>
            <person name="Chiu C.-H."/>
            <person name="Tang P."/>
            <person name="Chu C."/>
            <person name="Hu S."/>
            <person name="Bao Q."/>
            <person name="Yu J."/>
            <person name="Chou Y.-Y."/>
            <person name="Wang H.-S."/>
            <person name="Lee Y.-S."/>
        </authorList>
    </citation>
    <scope>NUCLEOTIDE SEQUENCE [LARGE SCALE GENOMIC DNA]</scope>
    <source>
        <strain>SC-B67</strain>
    </source>
</reference>
<keyword id="KW-0324">Glycolysis</keyword>
<keyword id="KW-0413">Isomerase</keyword>
<keyword id="KW-0464">Manganese</keyword>
<keyword id="KW-0479">Metal-binding</keyword>
<evidence type="ECO:0000255" key="1">
    <source>
        <dbReference type="HAMAP-Rule" id="MF_01038"/>
    </source>
</evidence>
<organism>
    <name type="scientific">Salmonella choleraesuis (strain SC-B67)</name>
    <dbReference type="NCBI Taxonomy" id="321314"/>
    <lineage>
        <taxon>Bacteria</taxon>
        <taxon>Pseudomonadati</taxon>
        <taxon>Pseudomonadota</taxon>
        <taxon>Gammaproteobacteria</taxon>
        <taxon>Enterobacterales</taxon>
        <taxon>Enterobacteriaceae</taxon>
        <taxon>Salmonella</taxon>
    </lineage>
</organism>
<comment type="function">
    <text evidence="1">Catalyzes the interconversion of 2-phosphoglycerate and 3-phosphoglycerate.</text>
</comment>
<comment type="catalytic activity">
    <reaction evidence="1">
        <text>(2R)-2-phosphoglycerate = (2R)-3-phosphoglycerate</text>
        <dbReference type="Rhea" id="RHEA:15901"/>
        <dbReference type="ChEBI" id="CHEBI:58272"/>
        <dbReference type="ChEBI" id="CHEBI:58289"/>
        <dbReference type="EC" id="5.4.2.12"/>
    </reaction>
</comment>
<comment type="cofactor">
    <cofactor evidence="1">
        <name>Mn(2+)</name>
        <dbReference type="ChEBI" id="CHEBI:29035"/>
    </cofactor>
    <text evidence="1">Binds 2 manganese ions per subunit.</text>
</comment>
<comment type="pathway">
    <text evidence="1">Carbohydrate degradation; glycolysis; pyruvate from D-glyceraldehyde 3-phosphate: step 3/5.</text>
</comment>
<comment type="subunit">
    <text evidence="1">Monomer.</text>
</comment>
<comment type="similarity">
    <text evidence="1">Belongs to the BPG-independent phosphoglycerate mutase family.</text>
</comment>